<accession>A9I0H9</accession>
<keyword id="KW-0067">ATP-binding</keyword>
<keyword id="KW-0436">Ligase</keyword>
<keyword id="KW-0547">Nucleotide-binding</keyword>
<keyword id="KW-0648">Protein biosynthesis</keyword>
<reference key="1">
    <citation type="journal article" date="2008" name="BMC Genomics">
        <title>The missing link: Bordetella petrii is endowed with both the metabolic versatility of environmental bacteria and virulence traits of pathogenic Bordetellae.</title>
        <authorList>
            <person name="Gross R."/>
            <person name="Guzman C.A."/>
            <person name="Sebaihia M."/>
            <person name="Martin dos Santos V.A.P."/>
            <person name="Pieper D.H."/>
            <person name="Koebnik R."/>
            <person name="Lechner M."/>
            <person name="Bartels D."/>
            <person name="Buhrmester J."/>
            <person name="Choudhuri J.V."/>
            <person name="Ebensen T."/>
            <person name="Gaigalat L."/>
            <person name="Herrmann S."/>
            <person name="Khachane A.N."/>
            <person name="Larisch C."/>
            <person name="Link S."/>
            <person name="Linke B."/>
            <person name="Meyer F."/>
            <person name="Mormann S."/>
            <person name="Nakunst D."/>
            <person name="Rueckert C."/>
            <person name="Schneiker-Bekel S."/>
            <person name="Schulze K."/>
            <person name="Voerholter F.-J."/>
            <person name="Yevsa T."/>
            <person name="Engle J.T."/>
            <person name="Goldman W.E."/>
            <person name="Puehler A."/>
            <person name="Goebel U.B."/>
            <person name="Goesmann A."/>
            <person name="Bloecker H."/>
            <person name="Kaiser O."/>
            <person name="Martinez-Arias R."/>
        </authorList>
    </citation>
    <scope>NUCLEOTIDE SEQUENCE [LARGE SCALE GENOMIC DNA]</scope>
    <source>
        <strain>ATCC BAA-461 / DSM 12804 / CCUG 43448</strain>
    </source>
</reference>
<name>GATC_BORPD</name>
<evidence type="ECO:0000255" key="1">
    <source>
        <dbReference type="HAMAP-Rule" id="MF_00122"/>
    </source>
</evidence>
<proteinExistence type="inferred from homology"/>
<feature type="chain" id="PRO_1000095262" description="Aspartyl/glutamyl-tRNA(Asn/Gln) amidotransferase subunit C">
    <location>
        <begin position="1"/>
        <end position="102"/>
    </location>
</feature>
<sequence>MALNEQDVARIARLARIELTPDQRSRAQDELNGILHLIERLQAADTEGVEPLAHPLSAHQDIALRLRPDAVTETPSEDRRAELLANAPDARDGLFLVPKVIE</sequence>
<organism>
    <name type="scientific">Bordetella petrii (strain ATCC BAA-461 / DSM 12804 / CCUG 43448)</name>
    <dbReference type="NCBI Taxonomy" id="340100"/>
    <lineage>
        <taxon>Bacteria</taxon>
        <taxon>Pseudomonadati</taxon>
        <taxon>Pseudomonadota</taxon>
        <taxon>Betaproteobacteria</taxon>
        <taxon>Burkholderiales</taxon>
        <taxon>Alcaligenaceae</taxon>
        <taxon>Bordetella</taxon>
    </lineage>
</organism>
<protein>
    <recommendedName>
        <fullName evidence="1">Aspartyl/glutamyl-tRNA(Asn/Gln) amidotransferase subunit C</fullName>
        <shortName evidence="1">Asp/Glu-ADT subunit C</shortName>
        <ecNumber evidence="1">6.3.5.-</ecNumber>
    </recommendedName>
</protein>
<dbReference type="EC" id="6.3.5.-" evidence="1"/>
<dbReference type="EMBL" id="AM902716">
    <property type="protein sequence ID" value="CAP40758.1"/>
    <property type="molecule type" value="Genomic_DNA"/>
</dbReference>
<dbReference type="SMR" id="A9I0H9"/>
<dbReference type="STRING" id="94624.Bpet0426"/>
<dbReference type="KEGG" id="bpt:Bpet0426"/>
<dbReference type="eggNOG" id="COG0721">
    <property type="taxonomic scope" value="Bacteria"/>
</dbReference>
<dbReference type="Proteomes" id="UP000001225">
    <property type="component" value="Chromosome"/>
</dbReference>
<dbReference type="GO" id="GO:0050566">
    <property type="term" value="F:asparaginyl-tRNA synthase (glutamine-hydrolyzing) activity"/>
    <property type="evidence" value="ECO:0007669"/>
    <property type="project" value="RHEA"/>
</dbReference>
<dbReference type="GO" id="GO:0005524">
    <property type="term" value="F:ATP binding"/>
    <property type="evidence" value="ECO:0007669"/>
    <property type="project" value="UniProtKB-KW"/>
</dbReference>
<dbReference type="GO" id="GO:0050567">
    <property type="term" value="F:glutaminyl-tRNA synthase (glutamine-hydrolyzing) activity"/>
    <property type="evidence" value="ECO:0007669"/>
    <property type="project" value="UniProtKB-UniRule"/>
</dbReference>
<dbReference type="GO" id="GO:0070681">
    <property type="term" value="P:glutaminyl-tRNAGln biosynthesis via transamidation"/>
    <property type="evidence" value="ECO:0007669"/>
    <property type="project" value="TreeGrafter"/>
</dbReference>
<dbReference type="GO" id="GO:0006450">
    <property type="term" value="P:regulation of translational fidelity"/>
    <property type="evidence" value="ECO:0007669"/>
    <property type="project" value="InterPro"/>
</dbReference>
<dbReference type="GO" id="GO:0006412">
    <property type="term" value="P:translation"/>
    <property type="evidence" value="ECO:0007669"/>
    <property type="project" value="UniProtKB-UniRule"/>
</dbReference>
<dbReference type="Gene3D" id="1.10.20.60">
    <property type="entry name" value="Glu-tRNAGln amidotransferase C subunit, N-terminal domain"/>
    <property type="match status" value="1"/>
</dbReference>
<dbReference type="HAMAP" id="MF_00122">
    <property type="entry name" value="GatC"/>
    <property type="match status" value="1"/>
</dbReference>
<dbReference type="InterPro" id="IPR036113">
    <property type="entry name" value="Asp/Glu-ADT_sf_sub_c"/>
</dbReference>
<dbReference type="InterPro" id="IPR003837">
    <property type="entry name" value="GatC"/>
</dbReference>
<dbReference type="NCBIfam" id="TIGR00135">
    <property type="entry name" value="gatC"/>
    <property type="match status" value="1"/>
</dbReference>
<dbReference type="PANTHER" id="PTHR15004">
    <property type="entry name" value="GLUTAMYL-TRNA(GLN) AMIDOTRANSFERASE SUBUNIT C, MITOCHONDRIAL"/>
    <property type="match status" value="1"/>
</dbReference>
<dbReference type="PANTHER" id="PTHR15004:SF0">
    <property type="entry name" value="GLUTAMYL-TRNA(GLN) AMIDOTRANSFERASE SUBUNIT C, MITOCHONDRIAL"/>
    <property type="match status" value="1"/>
</dbReference>
<dbReference type="Pfam" id="PF02686">
    <property type="entry name" value="GatC"/>
    <property type="match status" value="1"/>
</dbReference>
<dbReference type="SUPFAM" id="SSF141000">
    <property type="entry name" value="Glu-tRNAGln amidotransferase C subunit"/>
    <property type="match status" value="1"/>
</dbReference>
<comment type="function">
    <text evidence="1">Allows the formation of correctly charged Asn-tRNA(Asn) or Gln-tRNA(Gln) through the transamidation of misacylated Asp-tRNA(Asn) or Glu-tRNA(Gln) in organisms which lack either or both of asparaginyl-tRNA or glutaminyl-tRNA synthetases. The reaction takes place in the presence of glutamine and ATP through an activated phospho-Asp-tRNA(Asn) or phospho-Glu-tRNA(Gln).</text>
</comment>
<comment type="catalytic activity">
    <reaction evidence="1">
        <text>L-glutamyl-tRNA(Gln) + L-glutamine + ATP + H2O = L-glutaminyl-tRNA(Gln) + L-glutamate + ADP + phosphate + H(+)</text>
        <dbReference type="Rhea" id="RHEA:17521"/>
        <dbReference type="Rhea" id="RHEA-COMP:9681"/>
        <dbReference type="Rhea" id="RHEA-COMP:9684"/>
        <dbReference type="ChEBI" id="CHEBI:15377"/>
        <dbReference type="ChEBI" id="CHEBI:15378"/>
        <dbReference type="ChEBI" id="CHEBI:29985"/>
        <dbReference type="ChEBI" id="CHEBI:30616"/>
        <dbReference type="ChEBI" id="CHEBI:43474"/>
        <dbReference type="ChEBI" id="CHEBI:58359"/>
        <dbReference type="ChEBI" id="CHEBI:78520"/>
        <dbReference type="ChEBI" id="CHEBI:78521"/>
        <dbReference type="ChEBI" id="CHEBI:456216"/>
    </reaction>
</comment>
<comment type="catalytic activity">
    <reaction evidence="1">
        <text>L-aspartyl-tRNA(Asn) + L-glutamine + ATP + H2O = L-asparaginyl-tRNA(Asn) + L-glutamate + ADP + phosphate + 2 H(+)</text>
        <dbReference type="Rhea" id="RHEA:14513"/>
        <dbReference type="Rhea" id="RHEA-COMP:9674"/>
        <dbReference type="Rhea" id="RHEA-COMP:9677"/>
        <dbReference type="ChEBI" id="CHEBI:15377"/>
        <dbReference type="ChEBI" id="CHEBI:15378"/>
        <dbReference type="ChEBI" id="CHEBI:29985"/>
        <dbReference type="ChEBI" id="CHEBI:30616"/>
        <dbReference type="ChEBI" id="CHEBI:43474"/>
        <dbReference type="ChEBI" id="CHEBI:58359"/>
        <dbReference type="ChEBI" id="CHEBI:78515"/>
        <dbReference type="ChEBI" id="CHEBI:78516"/>
        <dbReference type="ChEBI" id="CHEBI:456216"/>
    </reaction>
</comment>
<comment type="subunit">
    <text evidence="1">Heterotrimer of A, B and C subunits.</text>
</comment>
<comment type="similarity">
    <text evidence="1">Belongs to the GatC family.</text>
</comment>
<gene>
    <name evidence="1" type="primary">gatC</name>
    <name type="ordered locus">Bpet0426</name>
</gene>